<protein>
    <recommendedName>
        <fullName evidence="1">Chaperonin GroEL</fullName>
        <ecNumber evidence="1">5.6.1.7</ecNumber>
    </recommendedName>
    <alternativeName>
        <fullName evidence="1">60 kDa chaperonin</fullName>
    </alternativeName>
    <alternativeName>
        <fullName evidence="1">Chaperonin-60</fullName>
        <shortName evidence="1">Cpn60</shortName>
    </alternativeName>
</protein>
<accession>P31293</accession>
<gene>
    <name evidence="1" type="primary">groEL</name>
    <name evidence="1" type="synonym">groL</name>
    <name type="synonym">mopA</name>
</gene>
<sequence>MSAKDVKFGGDARVRMMEGVNILANAVKVTLGPKGRNVVLEKSFGAPTVTKDGVSVAKEIELKDKFENMGAQMVKEVASKTSDIAGDGTTTATVLAQAMVREGLKAVAAGMNPMDLKRGMDKAVEAATEELKKLSKPCPRPMAIAQVGTISANSDDSIGTIIAEAMEKVGKEGVITVEDGTSLQNELDVVEGMQFDRGYLSPYFINNQQSQSAELDAPYILLYDKKISNIRDLLPVLEGVAKAGKPLLIIAEDVEGEALATLVVNTIRGIVKVCAVKAPGFGDRRKAMLQDIAILTGATVISEEVGLSLEKATLTDLGTAKRVQVGKDETTIIDGSGSEIDIKARCEQIRAQVEETSSDYDREKLQERLAKLAGGVAVIKVGAATEIEMKEKKARVEDALHATRAAVEEGIVPGGGVALVRAIAAVKDLKGANHDQDVGIAIARRAMEEPLRQIVANAGEEPSVILHKVAEGTGNFGYNAANGEYGDMVEMGILDPTKVTRSALQNSCSVAGLMITTEAMIADEPKDDAPAMPGGGMGDMGGMGMM</sequence>
<comment type="function">
    <text evidence="1">Together with its co-chaperonin GroES, plays an essential role in assisting protein folding. The GroEL-GroES system forms a nano-cage that allows encapsulation of the non-native substrate proteins and provides a physical environment optimized to promote and accelerate protein folding.</text>
</comment>
<comment type="catalytic activity">
    <reaction evidence="1">
        <text>ATP + H2O + a folded polypeptide = ADP + phosphate + an unfolded polypeptide.</text>
        <dbReference type="EC" id="5.6.1.7"/>
    </reaction>
</comment>
<comment type="subunit">
    <text evidence="1">Forms a cylinder of 14 subunits composed of two heptameric rings stacked back-to-back. Interacts with the co-chaperonin GroES.</text>
</comment>
<comment type="subcellular location">
    <subcellularLocation>
        <location evidence="1">Cytoplasm</location>
    </subcellularLocation>
</comment>
<comment type="similarity">
    <text evidence="1">Belongs to the chaperonin (HSP60) family.</text>
</comment>
<reference key="1">
    <citation type="journal article" date="1993" name="J. Bacteriol.">
        <title>Cloning, characterization, and functional expression in Escherichia coli of chaperonin (groESL) genes from the phototrophic sulfur bacterium Chromatium vinosum.</title>
        <authorList>
            <person name="Ferreyra R."/>
            <person name="Soncini F."/>
            <person name="Viale A.M."/>
        </authorList>
    </citation>
    <scope>NUCLEOTIDE SEQUENCE [GENOMIC DNA]</scope>
</reference>
<reference key="2">
    <citation type="journal article" date="1998" name="Protein Expr. Purif.">
        <title>Purification and characterization of Chromatium vinosum GroEL and GroES proteins overexpressed in Escherichia coli cells lacking the endogenous groESL operon.</title>
        <authorList>
            <person name="Dionisi H.M."/>
            <person name="Viale A.M."/>
        </authorList>
    </citation>
    <scope>CHARACTERIZATION</scope>
</reference>
<organism>
    <name type="scientific">Allochromatium vinosum</name>
    <name type="common">Chromatium vinosum</name>
    <dbReference type="NCBI Taxonomy" id="1049"/>
    <lineage>
        <taxon>Bacteria</taxon>
        <taxon>Pseudomonadati</taxon>
        <taxon>Pseudomonadota</taxon>
        <taxon>Gammaproteobacteria</taxon>
        <taxon>Chromatiales</taxon>
        <taxon>Chromatiaceae</taxon>
        <taxon>Allochromatium</taxon>
    </lineage>
</organism>
<feature type="chain" id="PRO_0000063335" description="Chaperonin GroEL">
    <location>
        <begin position="1"/>
        <end position="546"/>
    </location>
</feature>
<feature type="binding site" evidence="1">
    <location>
        <begin position="30"/>
        <end position="33"/>
    </location>
    <ligand>
        <name>ATP</name>
        <dbReference type="ChEBI" id="CHEBI:30616"/>
    </ligand>
</feature>
<feature type="binding site" evidence="1">
    <location>
        <position position="51"/>
    </location>
    <ligand>
        <name>ATP</name>
        <dbReference type="ChEBI" id="CHEBI:30616"/>
    </ligand>
</feature>
<feature type="binding site" evidence="1">
    <location>
        <begin position="87"/>
        <end position="91"/>
    </location>
    <ligand>
        <name>ATP</name>
        <dbReference type="ChEBI" id="CHEBI:30616"/>
    </ligand>
</feature>
<feature type="binding site" evidence="1">
    <location>
        <position position="415"/>
    </location>
    <ligand>
        <name>ATP</name>
        <dbReference type="ChEBI" id="CHEBI:30616"/>
    </ligand>
</feature>
<feature type="binding site" evidence="1">
    <location>
        <begin position="479"/>
        <end position="481"/>
    </location>
    <ligand>
        <name>ATP</name>
        <dbReference type="ChEBI" id="CHEBI:30616"/>
    </ligand>
</feature>
<feature type="binding site" evidence="1">
    <location>
        <position position="495"/>
    </location>
    <ligand>
        <name>ATP</name>
        <dbReference type="ChEBI" id="CHEBI:30616"/>
    </ligand>
</feature>
<proteinExistence type="evidence at protein level"/>
<keyword id="KW-0067">ATP-binding</keyword>
<keyword id="KW-0143">Chaperone</keyword>
<keyword id="KW-0963">Cytoplasm</keyword>
<keyword id="KW-0413">Isomerase</keyword>
<keyword id="KW-0547">Nucleotide-binding</keyword>
<evidence type="ECO:0000255" key="1">
    <source>
        <dbReference type="HAMAP-Rule" id="MF_00600"/>
    </source>
</evidence>
<dbReference type="EC" id="5.6.1.7" evidence="1"/>
<dbReference type="EMBL" id="M99443">
    <property type="protein sequence ID" value="AAA23319.1"/>
    <property type="molecule type" value="Genomic_DNA"/>
</dbReference>
<dbReference type="PIR" id="B47073">
    <property type="entry name" value="B47073"/>
</dbReference>
<dbReference type="SMR" id="P31293"/>
<dbReference type="GO" id="GO:0005737">
    <property type="term" value="C:cytoplasm"/>
    <property type="evidence" value="ECO:0007669"/>
    <property type="project" value="UniProtKB-SubCell"/>
</dbReference>
<dbReference type="GO" id="GO:0005524">
    <property type="term" value="F:ATP binding"/>
    <property type="evidence" value="ECO:0007669"/>
    <property type="project" value="UniProtKB-UniRule"/>
</dbReference>
<dbReference type="GO" id="GO:0140662">
    <property type="term" value="F:ATP-dependent protein folding chaperone"/>
    <property type="evidence" value="ECO:0007669"/>
    <property type="project" value="InterPro"/>
</dbReference>
<dbReference type="GO" id="GO:0016853">
    <property type="term" value="F:isomerase activity"/>
    <property type="evidence" value="ECO:0007669"/>
    <property type="project" value="UniProtKB-KW"/>
</dbReference>
<dbReference type="GO" id="GO:0051082">
    <property type="term" value="F:unfolded protein binding"/>
    <property type="evidence" value="ECO:0007669"/>
    <property type="project" value="UniProtKB-UniRule"/>
</dbReference>
<dbReference type="GO" id="GO:0042026">
    <property type="term" value="P:protein refolding"/>
    <property type="evidence" value="ECO:0007669"/>
    <property type="project" value="UniProtKB-UniRule"/>
</dbReference>
<dbReference type="CDD" id="cd03344">
    <property type="entry name" value="GroEL"/>
    <property type="match status" value="1"/>
</dbReference>
<dbReference type="FunFam" id="1.10.560.10:FF:000001">
    <property type="entry name" value="60 kDa chaperonin"/>
    <property type="match status" value="1"/>
</dbReference>
<dbReference type="FunFam" id="3.50.7.10:FF:000001">
    <property type="entry name" value="60 kDa chaperonin"/>
    <property type="match status" value="1"/>
</dbReference>
<dbReference type="Gene3D" id="3.50.7.10">
    <property type="entry name" value="GroEL"/>
    <property type="match status" value="1"/>
</dbReference>
<dbReference type="Gene3D" id="1.10.560.10">
    <property type="entry name" value="GroEL-like equatorial domain"/>
    <property type="match status" value="1"/>
</dbReference>
<dbReference type="Gene3D" id="3.30.260.10">
    <property type="entry name" value="TCP-1-like chaperonin intermediate domain"/>
    <property type="match status" value="1"/>
</dbReference>
<dbReference type="HAMAP" id="MF_00600">
    <property type="entry name" value="CH60"/>
    <property type="match status" value="1"/>
</dbReference>
<dbReference type="InterPro" id="IPR018370">
    <property type="entry name" value="Chaperonin_Cpn60_CS"/>
</dbReference>
<dbReference type="InterPro" id="IPR001844">
    <property type="entry name" value="Cpn60/GroEL"/>
</dbReference>
<dbReference type="InterPro" id="IPR002423">
    <property type="entry name" value="Cpn60/GroEL/TCP-1"/>
</dbReference>
<dbReference type="InterPro" id="IPR027409">
    <property type="entry name" value="GroEL-like_apical_dom_sf"/>
</dbReference>
<dbReference type="InterPro" id="IPR027413">
    <property type="entry name" value="GROEL-like_equatorial_sf"/>
</dbReference>
<dbReference type="InterPro" id="IPR027410">
    <property type="entry name" value="TCP-1-like_intermed_sf"/>
</dbReference>
<dbReference type="NCBIfam" id="TIGR02348">
    <property type="entry name" value="GroEL"/>
    <property type="match status" value="1"/>
</dbReference>
<dbReference type="NCBIfam" id="NF000592">
    <property type="entry name" value="PRK00013.1"/>
    <property type="match status" value="1"/>
</dbReference>
<dbReference type="NCBIfam" id="NF009487">
    <property type="entry name" value="PRK12849.1"/>
    <property type="match status" value="1"/>
</dbReference>
<dbReference type="NCBIfam" id="NF009488">
    <property type="entry name" value="PRK12850.1"/>
    <property type="match status" value="1"/>
</dbReference>
<dbReference type="NCBIfam" id="NF009489">
    <property type="entry name" value="PRK12851.1"/>
    <property type="match status" value="1"/>
</dbReference>
<dbReference type="PANTHER" id="PTHR45633">
    <property type="entry name" value="60 KDA HEAT SHOCK PROTEIN, MITOCHONDRIAL"/>
    <property type="match status" value="1"/>
</dbReference>
<dbReference type="Pfam" id="PF00118">
    <property type="entry name" value="Cpn60_TCP1"/>
    <property type="match status" value="1"/>
</dbReference>
<dbReference type="PRINTS" id="PR00298">
    <property type="entry name" value="CHAPERONIN60"/>
</dbReference>
<dbReference type="SUPFAM" id="SSF52029">
    <property type="entry name" value="GroEL apical domain-like"/>
    <property type="match status" value="1"/>
</dbReference>
<dbReference type="SUPFAM" id="SSF48592">
    <property type="entry name" value="GroEL equatorial domain-like"/>
    <property type="match status" value="1"/>
</dbReference>
<dbReference type="SUPFAM" id="SSF54849">
    <property type="entry name" value="GroEL-intermediate domain like"/>
    <property type="match status" value="1"/>
</dbReference>
<dbReference type="PROSITE" id="PS00296">
    <property type="entry name" value="CHAPERONINS_CPN60"/>
    <property type="match status" value="1"/>
</dbReference>
<name>CH60_ALLVI</name>